<evidence type="ECO:0000255" key="1">
    <source>
        <dbReference type="HAMAP-Rule" id="MF_01710"/>
    </source>
</evidence>
<accession>Q6G799</accession>
<keyword id="KW-0067">ATP-binding</keyword>
<keyword id="KW-1003">Cell membrane</keyword>
<keyword id="KW-0472">Membrane</keyword>
<keyword id="KW-0547">Nucleotide-binding</keyword>
<keyword id="KW-1278">Translocase</keyword>
<keyword id="KW-0813">Transport</keyword>
<sequence>MEDKNSVIVFKNVSFQYQSDASFTLKDVSFSIPKGQWTSIVGHNGSGKSTIAKLMIGIEKVKSGEIFYNNQTITDDNFEKLRKDIGIVFQNPDNQFVGSIVKYDVAFGLENHAVPHDEMHRRVGEALKQVDMLERADYEPNALSGGQKQRVAIASVLALNPSVIILDEATSMLDPDARQNLLDLVRKVKSEHNITIISITHDLSEAMEADHVIVMNKGTVYKEGTAIEIFDHAEELTTIGLDLPFPIKINQMLGYQTSFLTYEGLVDQL</sequence>
<protein>
    <recommendedName>
        <fullName evidence="1">Energy-coupling factor transporter ATP-binding protein EcfA1</fullName>
        <shortName evidence="1">ECF transporter A component EcfA1</shortName>
        <ecNumber evidence="1">7.-.-.-</ecNumber>
    </recommendedName>
</protein>
<feature type="chain" id="PRO_0000092075" description="Energy-coupling factor transporter ATP-binding protein EcfA1">
    <location>
        <begin position="1"/>
        <end position="269"/>
    </location>
</feature>
<feature type="domain" description="ABC transporter" evidence="1">
    <location>
        <begin position="8"/>
        <end position="242"/>
    </location>
</feature>
<feature type="binding site" evidence="1">
    <location>
        <begin position="42"/>
        <end position="49"/>
    </location>
    <ligand>
        <name>ATP</name>
        <dbReference type="ChEBI" id="CHEBI:30616"/>
    </ligand>
</feature>
<gene>
    <name evidence="1" type="primary">ecfA1</name>
    <name type="synonym">cbiO1</name>
    <name type="ordered locus">SAS2113</name>
</gene>
<comment type="function">
    <text evidence="1">ATP-binding (A) component of a common energy-coupling factor (ECF) ABC-transporter complex. Unlike classic ABC transporters this ECF transporter provides the energy necessary to transport a number of different substrates.</text>
</comment>
<comment type="subunit">
    <text evidence="1">Forms a stable energy-coupling factor (ECF) transporter complex composed of 2 membrane-embedded substrate-binding proteins (S component), 2 ATP-binding proteins (A component) and 2 transmembrane proteins (T component).</text>
</comment>
<comment type="subcellular location">
    <subcellularLocation>
        <location evidence="1">Cell membrane</location>
        <topology evidence="1">Peripheral membrane protein</topology>
    </subcellularLocation>
</comment>
<comment type="similarity">
    <text evidence="1">Belongs to the ABC transporter superfamily. Energy-coupling factor EcfA family.</text>
</comment>
<proteinExistence type="inferred from homology"/>
<reference key="1">
    <citation type="journal article" date="2004" name="Proc. Natl. Acad. Sci. U.S.A.">
        <title>Complete genomes of two clinical Staphylococcus aureus strains: evidence for the rapid evolution of virulence and drug resistance.</title>
        <authorList>
            <person name="Holden M.T.G."/>
            <person name="Feil E.J."/>
            <person name="Lindsay J.A."/>
            <person name="Peacock S.J."/>
            <person name="Day N.P.J."/>
            <person name="Enright M.C."/>
            <person name="Foster T.J."/>
            <person name="Moore C.E."/>
            <person name="Hurst L."/>
            <person name="Atkin R."/>
            <person name="Barron A."/>
            <person name="Bason N."/>
            <person name="Bentley S.D."/>
            <person name="Chillingworth C."/>
            <person name="Chillingworth T."/>
            <person name="Churcher C."/>
            <person name="Clark L."/>
            <person name="Corton C."/>
            <person name="Cronin A."/>
            <person name="Doggett J."/>
            <person name="Dowd L."/>
            <person name="Feltwell T."/>
            <person name="Hance Z."/>
            <person name="Harris B."/>
            <person name="Hauser H."/>
            <person name="Holroyd S."/>
            <person name="Jagels K."/>
            <person name="James K.D."/>
            <person name="Lennard N."/>
            <person name="Line A."/>
            <person name="Mayes R."/>
            <person name="Moule S."/>
            <person name="Mungall K."/>
            <person name="Ormond D."/>
            <person name="Quail M.A."/>
            <person name="Rabbinowitsch E."/>
            <person name="Rutherford K.M."/>
            <person name="Sanders M."/>
            <person name="Sharp S."/>
            <person name="Simmonds M."/>
            <person name="Stevens K."/>
            <person name="Whitehead S."/>
            <person name="Barrell B.G."/>
            <person name="Spratt B.G."/>
            <person name="Parkhill J."/>
        </authorList>
    </citation>
    <scope>NUCLEOTIDE SEQUENCE [LARGE SCALE GENOMIC DNA]</scope>
    <source>
        <strain>MSSA476</strain>
    </source>
</reference>
<organism>
    <name type="scientific">Staphylococcus aureus (strain MSSA476)</name>
    <dbReference type="NCBI Taxonomy" id="282459"/>
    <lineage>
        <taxon>Bacteria</taxon>
        <taxon>Bacillati</taxon>
        <taxon>Bacillota</taxon>
        <taxon>Bacilli</taxon>
        <taxon>Bacillales</taxon>
        <taxon>Staphylococcaceae</taxon>
        <taxon>Staphylococcus</taxon>
    </lineage>
</organism>
<dbReference type="EC" id="7.-.-.-" evidence="1"/>
<dbReference type="EMBL" id="BX571857">
    <property type="protein sequence ID" value="CAG43924.1"/>
    <property type="molecule type" value="Genomic_DNA"/>
</dbReference>
<dbReference type="RefSeq" id="WP_000389676.1">
    <property type="nucleotide sequence ID" value="NC_002953.3"/>
</dbReference>
<dbReference type="SMR" id="Q6G799"/>
<dbReference type="KEGG" id="sas:SAS2113"/>
<dbReference type="HOGENOM" id="CLU_000604_1_22_9"/>
<dbReference type="GO" id="GO:0043190">
    <property type="term" value="C:ATP-binding cassette (ABC) transporter complex"/>
    <property type="evidence" value="ECO:0007669"/>
    <property type="project" value="TreeGrafter"/>
</dbReference>
<dbReference type="GO" id="GO:0005524">
    <property type="term" value="F:ATP binding"/>
    <property type="evidence" value="ECO:0007669"/>
    <property type="project" value="UniProtKB-KW"/>
</dbReference>
<dbReference type="GO" id="GO:0016887">
    <property type="term" value="F:ATP hydrolysis activity"/>
    <property type="evidence" value="ECO:0007669"/>
    <property type="project" value="InterPro"/>
</dbReference>
<dbReference type="GO" id="GO:0042626">
    <property type="term" value="F:ATPase-coupled transmembrane transporter activity"/>
    <property type="evidence" value="ECO:0007669"/>
    <property type="project" value="TreeGrafter"/>
</dbReference>
<dbReference type="CDD" id="cd03225">
    <property type="entry name" value="ABC_cobalt_CbiO_domain1"/>
    <property type="match status" value="1"/>
</dbReference>
<dbReference type="FunFam" id="3.40.50.300:FF:000224">
    <property type="entry name" value="Energy-coupling factor transporter ATP-binding protein EcfA"/>
    <property type="match status" value="1"/>
</dbReference>
<dbReference type="Gene3D" id="3.40.50.300">
    <property type="entry name" value="P-loop containing nucleotide triphosphate hydrolases"/>
    <property type="match status" value="1"/>
</dbReference>
<dbReference type="InterPro" id="IPR003593">
    <property type="entry name" value="AAA+_ATPase"/>
</dbReference>
<dbReference type="InterPro" id="IPR003439">
    <property type="entry name" value="ABC_transporter-like_ATP-bd"/>
</dbReference>
<dbReference type="InterPro" id="IPR017871">
    <property type="entry name" value="ABC_transporter-like_CS"/>
</dbReference>
<dbReference type="InterPro" id="IPR015856">
    <property type="entry name" value="ABC_transpr_CbiO/EcfA_su"/>
</dbReference>
<dbReference type="InterPro" id="IPR050095">
    <property type="entry name" value="ECF_ABC_transporter_ATP-bd"/>
</dbReference>
<dbReference type="InterPro" id="IPR030947">
    <property type="entry name" value="EcfA_1"/>
</dbReference>
<dbReference type="InterPro" id="IPR027417">
    <property type="entry name" value="P-loop_NTPase"/>
</dbReference>
<dbReference type="NCBIfam" id="TIGR04520">
    <property type="entry name" value="ECF_ATPase_1"/>
    <property type="match status" value="1"/>
</dbReference>
<dbReference type="NCBIfam" id="NF010167">
    <property type="entry name" value="PRK13648.1"/>
    <property type="match status" value="1"/>
</dbReference>
<dbReference type="PANTHER" id="PTHR43553:SF24">
    <property type="entry name" value="ENERGY-COUPLING FACTOR TRANSPORTER ATP-BINDING PROTEIN ECFA1"/>
    <property type="match status" value="1"/>
</dbReference>
<dbReference type="PANTHER" id="PTHR43553">
    <property type="entry name" value="HEAVY METAL TRANSPORTER"/>
    <property type="match status" value="1"/>
</dbReference>
<dbReference type="Pfam" id="PF00005">
    <property type="entry name" value="ABC_tran"/>
    <property type="match status" value="1"/>
</dbReference>
<dbReference type="SMART" id="SM00382">
    <property type="entry name" value="AAA"/>
    <property type="match status" value="1"/>
</dbReference>
<dbReference type="SUPFAM" id="SSF52540">
    <property type="entry name" value="P-loop containing nucleoside triphosphate hydrolases"/>
    <property type="match status" value="1"/>
</dbReference>
<dbReference type="PROSITE" id="PS00211">
    <property type="entry name" value="ABC_TRANSPORTER_1"/>
    <property type="match status" value="1"/>
</dbReference>
<dbReference type="PROSITE" id="PS50893">
    <property type="entry name" value="ABC_TRANSPORTER_2"/>
    <property type="match status" value="1"/>
</dbReference>
<dbReference type="PROSITE" id="PS51246">
    <property type="entry name" value="CBIO"/>
    <property type="match status" value="1"/>
</dbReference>
<name>ECFA1_STAAS</name>